<proteinExistence type="inferred from homology"/>
<feature type="chain" id="PRO_1000017776" description="Zinc transporter ZupT">
    <location>
        <begin position="1"/>
        <end position="257"/>
    </location>
</feature>
<feature type="transmembrane region" description="Helical" evidence="1">
    <location>
        <begin position="5"/>
        <end position="25"/>
    </location>
</feature>
<feature type="transmembrane region" description="Helical" evidence="1">
    <location>
        <begin position="32"/>
        <end position="52"/>
    </location>
</feature>
<feature type="transmembrane region" description="Helical" evidence="1">
    <location>
        <begin position="61"/>
        <end position="81"/>
    </location>
</feature>
<feature type="transmembrane region" description="Helical" evidence="1">
    <location>
        <begin position="109"/>
        <end position="129"/>
    </location>
</feature>
<feature type="transmembrane region" description="Helical" evidence="1">
    <location>
        <begin position="137"/>
        <end position="157"/>
    </location>
</feature>
<feature type="transmembrane region" description="Helical" evidence="1">
    <location>
        <begin position="171"/>
        <end position="191"/>
    </location>
</feature>
<feature type="transmembrane region" description="Helical" evidence="1">
    <location>
        <begin position="195"/>
        <end position="215"/>
    </location>
</feature>
<feature type="transmembrane region" description="Helical" evidence="1">
    <location>
        <begin position="236"/>
        <end position="256"/>
    </location>
</feature>
<feature type="binding site" description="M2 metal binding site" evidence="1">
    <location>
        <position position="120"/>
    </location>
    <ligand>
        <name>Fe(2+)</name>
        <dbReference type="ChEBI" id="CHEBI:29033"/>
    </ligand>
</feature>
<feature type="binding site" description="M2 metal binding site" evidence="1">
    <location>
        <position position="123"/>
    </location>
    <ligand>
        <name>Fe(2+)</name>
        <dbReference type="ChEBI" id="CHEBI:29033"/>
    </ligand>
</feature>
<feature type="binding site" description="M1 metal binding site" evidence="1">
    <location>
        <position position="123"/>
    </location>
    <ligand>
        <name>Zn(2+)</name>
        <dbReference type="ChEBI" id="CHEBI:29105"/>
    </ligand>
</feature>
<feature type="binding site" description="M1 metal binding site" evidence="1">
    <location>
        <position position="148"/>
    </location>
    <ligand>
        <name>Zn(2+)</name>
        <dbReference type="ChEBI" id="CHEBI:29105"/>
    </ligand>
</feature>
<feature type="binding site" description="M2 metal binding site" evidence="1">
    <location>
        <position position="149"/>
    </location>
    <ligand>
        <name>Fe(2+)</name>
        <dbReference type="ChEBI" id="CHEBI:29033"/>
    </ligand>
</feature>
<feature type="binding site" description="M2 metal binding site" evidence="1">
    <location>
        <position position="152"/>
    </location>
    <ligand>
        <name>Fe(2+)</name>
        <dbReference type="ChEBI" id="CHEBI:29033"/>
    </ligand>
</feature>
<feature type="binding site" description="M1 metal binding site" evidence="1">
    <location>
        <position position="152"/>
    </location>
    <ligand>
        <name>Zn(2+)</name>
        <dbReference type="ChEBI" id="CHEBI:29105"/>
    </ligand>
</feature>
<feature type="binding site" description="M2 metal binding site" evidence="1">
    <location>
        <position position="181"/>
    </location>
    <ligand>
        <name>Fe(2+)</name>
        <dbReference type="ChEBI" id="CHEBI:29033"/>
    </ligand>
</feature>
<sequence length="257" mass="26544">MSVPLILTLLAGAATFIGAFLGVLGQKPSNRVLAFSLGFAAGIMLLISLMEMLPAALDTEGMSPVLGYGMFIIGLLGYFGLDRLLPHAHPQDLVQKRQQPLPGSIKRTAILLTLGISLHNFPEGIATFVTASSNLELGFGIALAVALHNIPEGLAVAGPVYAATGSKRTAIFWAGISGMAEILGGVLAWLILGSLVSPIVMAAIMAAVAGIMVALSVDELMPLAKEIDPNNNPSYGVLCGMSIMGLSLVILQTIGIG</sequence>
<reference key="1">
    <citation type="journal article" date="2005" name="Nucleic Acids Res.">
        <title>The genome sequence of Salmonella enterica serovar Choleraesuis, a highly invasive and resistant zoonotic pathogen.</title>
        <authorList>
            <person name="Chiu C.-H."/>
            <person name="Tang P."/>
            <person name="Chu C."/>
            <person name="Hu S."/>
            <person name="Bao Q."/>
            <person name="Yu J."/>
            <person name="Chou Y.-Y."/>
            <person name="Wang H.-S."/>
            <person name="Lee Y.-S."/>
        </authorList>
    </citation>
    <scope>NUCLEOTIDE SEQUENCE [LARGE SCALE GENOMIC DNA]</scope>
    <source>
        <strain>SC-B67</strain>
    </source>
</reference>
<accession>Q57JS2</accession>
<organism>
    <name type="scientific">Salmonella choleraesuis (strain SC-B67)</name>
    <dbReference type="NCBI Taxonomy" id="321314"/>
    <lineage>
        <taxon>Bacteria</taxon>
        <taxon>Pseudomonadati</taxon>
        <taxon>Pseudomonadota</taxon>
        <taxon>Gammaproteobacteria</taxon>
        <taxon>Enterobacterales</taxon>
        <taxon>Enterobacteriaceae</taxon>
        <taxon>Salmonella</taxon>
    </lineage>
</organism>
<name>ZUPT_SALCH</name>
<dbReference type="EMBL" id="AE017220">
    <property type="protein sequence ID" value="AAX67040.1"/>
    <property type="molecule type" value="Genomic_DNA"/>
</dbReference>
<dbReference type="RefSeq" id="WP_000115874.1">
    <property type="nucleotide sequence ID" value="NC_006905.1"/>
</dbReference>
<dbReference type="SMR" id="Q57JS2"/>
<dbReference type="KEGG" id="sec:SCH_3134"/>
<dbReference type="HOGENOM" id="CLU_015114_1_3_6"/>
<dbReference type="Proteomes" id="UP000000538">
    <property type="component" value="Chromosome"/>
</dbReference>
<dbReference type="GO" id="GO:0005886">
    <property type="term" value="C:plasma membrane"/>
    <property type="evidence" value="ECO:0007669"/>
    <property type="project" value="UniProtKB-SubCell"/>
</dbReference>
<dbReference type="GO" id="GO:0046872">
    <property type="term" value="F:metal ion binding"/>
    <property type="evidence" value="ECO:0007669"/>
    <property type="project" value="UniProtKB-KW"/>
</dbReference>
<dbReference type="GO" id="GO:0005385">
    <property type="term" value="F:zinc ion transmembrane transporter activity"/>
    <property type="evidence" value="ECO:0007669"/>
    <property type="project" value="UniProtKB-UniRule"/>
</dbReference>
<dbReference type="HAMAP" id="MF_00548">
    <property type="entry name" value="ZupT"/>
    <property type="match status" value="1"/>
</dbReference>
<dbReference type="InterPro" id="IPR003689">
    <property type="entry name" value="ZIP"/>
</dbReference>
<dbReference type="InterPro" id="IPR023498">
    <property type="entry name" value="Zn_transptr_ZupT"/>
</dbReference>
<dbReference type="NCBIfam" id="NF003243">
    <property type="entry name" value="PRK04201.1"/>
    <property type="match status" value="1"/>
</dbReference>
<dbReference type="PANTHER" id="PTHR11040:SF205">
    <property type="entry name" value="ZINC TRANSPORTER ZUPT"/>
    <property type="match status" value="1"/>
</dbReference>
<dbReference type="PANTHER" id="PTHR11040">
    <property type="entry name" value="ZINC/IRON TRANSPORTER"/>
    <property type="match status" value="1"/>
</dbReference>
<dbReference type="Pfam" id="PF02535">
    <property type="entry name" value="Zip"/>
    <property type="match status" value="2"/>
</dbReference>
<keyword id="KW-0997">Cell inner membrane</keyword>
<keyword id="KW-1003">Cell membrane</keyword>
<keyword id="KW-0406">Ion transport</keyword>
<keyword id="KW-0408">Iron</keyword>
<keyword id="KW-0472">Membrane</keyword>
<keyword id="KW-0479">Metal-binding</keyword>
<keyword id="KW-0812">Transmembrane</keyword>
<keyword id="KW-1133">Transmembrane helix</keyword>
<keyword id="KW-0813">Transport</keyword>
<keyword id="KW-0862">Zinc</keyword>
<keyword id="KW-0864">Zinc transport</keyword>
<evidence type="ECO:0000255" key="1">
    <source>
        <dbReference type="HAMAP-Rule" id="MF_00548"/>
    </source>
</evidence>
<gene>
    <name evidence="1" type="primary">zupT</name>
    <name type="ordered locus">SCH_3134</name>
</gene>
<protein>
    <recommendedName>
        <fullName evidence="1">Zinc transporter ZupT</fullName>
    </recommendedName>
</protein>
<comment type="function">
    <text evidence="1">Mediates zinc uptake. May also transport other divalent cations.</text>
</comment>
<comment type="catalytic activity">
    <reaction evidence="1">
        <text>Zn(2+)(in) = Zn(2+)(out)</text>
        <dbReference type="Rhea" id="RHEA:29351"/>
        <dbReference type="ChEBI" id="CHEBI:29105"/>
    </reaction>
</comment>
<comment type="subcellular location">
    <subcellularLocation>
        <location evidence="1">Cell inner membrane</location>
        <topology evidence="1">Multi-pass membrane protein</topology>
    </subcellularLocation>
</comment>
<comment type="similarity">
    <text evidence="1">Belongs to the ZIP transporter (TC 2.A.5) family. ZupT subfamily.</text>
</comment>